<accession>Q8QPL1</accession>
<comment type="function">
    <text>Binds to sialic acid-containing receptors on the cell surface, bringing about the attachment of the virus particle to the cell. This attachment induces virion internalization of about two third of the virus particles through clathrin-dependent endocytosis and about one third through a clathrin- and caveolin-independent pathway. Plays a major role in the determination of host range restriction and virulence. Class I viral fusion protein. Responsible for penetration of the virus into the cell cytoplasm by mediating the fusion of the membrane of the endocytosed virus particle with the endosomal membrane. Low pH in endosomes induces an irreversible conformational change in HA2, releasing the fusion hydrophobic peptide. Several trimers are required to form a competent fusion pore.</text>
</comment>
<comment type="function">
    <text evidence="1">Binds to sialic acid-containing receptors on the cell surface, bringing about the attachment of the virus particle to the cell. This attachment induces virion internalization either through clathrin-dependent endocytosis or through clathrin- and caveolin-independent pathway. Plays a major role in the determination of host range restriction and virulence. Class I viral fusion protein. Responsible for penetration of the virus into the cell cytoplasm by mediating the fusion of the membrane of the endocytosed virus particle with the endosomal membrane. Low pH in endosomes induces an irreversible conformational change in HA2, releasing the fusion hydrophobic peptide. Several trimers are required to form a competent fusion pore.</text>
</comment>
<comment type="subunit">
    <text evidence="1">Homotrimer of disulfide-linked HA1-HA2.</text>
</comment>
<comment type="subcellular location">
    <subcellularLocation>
        <location evidence="1">Virion membrane</location>
        <topology evidence="1">Single-pass type I membrane protein</topology>
    </subcellularLocation>
    <subcellularLocation>
        <location evidence="1">Host apical cell membrane</location>
        <topology evidence="1">Single-pass type I membrane protein</topology>
    </subcellularLocation>
    <text evidence="1">Targeted to the apical plasma membrane in epithelial polarized cells through a signal present in the transmembrane domain. Associated with glycosphingolipid- and cholesterol-enriched detergent-resistant lipid rafts.</text>
</comment>
<comment type="PTM">
    <text evidence="1">Palmitoylated.</text>
</comment>
<comment type="PTM">
    <text evidence="1">In natural infection, inactive HA is matured into HA1 and HA2 outside the cell by one or more trypsin-like, arginine-specific endoprotease secreted by the bronchial epithelial cells. One identified protease that may be involved in this process is secreted in lungs by club cells.</text>
</comment>
<comment type="miscellaneous">
    <text>Major glycoprotein, comprises over 80% of the envelope proteins present in virus particle.</text>
</comment>
<comment type="miscellaneous">
    <text>The extent of infection into host organism is determined by HA. Influenza viruses bud from the apical surface of polarized epithelial cells (e.g. bronchial epithelial cells) into lumen of lungs and are therefore usually pneumotropic. The reason is that HA is cleaved by tryptase clara which is restricted to lungs. However, HAs of H5 and H7 pantropic avian viruses subtypes can be cleaved by furin and subtilisin-type enzymes, allowing the virus to grow in other organs than lungs.</text>
</comment>
<comment type="miscellaneous">
    <text evidence="2">The influenza A genome consist of 8 RNA segments. Genetic variation of hemagglutinin and/or neuraminidase genes results in the emergence of new influenza strains. The mechanism of variation can be the result of point mutations or the result of genetic reassortment between segments of two different strains.</text>
</comment>
<comment type="similarity">
    <text evidence="1">Belongs to the influenza viruses hemagglutinin family.</text>
</comment>
<gene>
    <name evidence="1" type="primary">HA</name>
</gene>
<feature type="signal peptide" evidence="1">
    <location>
        <begin position="1"/>
        <end position="16"/>
    </location>
</feature>
<feature type="chain" id="PRO_0000440367" description="Hemagglutinin" evidence="1">
    <location>
        <begin position="17"/>
        <end position="568"/>
    </location>
</feature>
<feature type="chain" id="PRO_0000440368" description="Hemagglutinin HA1 chain" evidence="1">
    <location>
        <begin position="17"/>
        <end position="345"/>
    </location>
</feature>
<feature type="chain" id="PRO_0000310871" description="Hemagglutinin HA2 chain" evidence="1">
    <location>
        <begin position="347"/>
        <end position="568"/>
    </location>
</feature>
<feature type="topological domain" description="Extracellular" evidence="1">
    <location>
        <begin position="17"/>
        <end position="531"/>
    </location>
</feature>
<feature type="transmembrane region" description="Helical" evidence="1">
    <location>
        <begin position="532"/>
        <end position="552"/>
    </location>
</feature>
<feature type="topological domain" description="Cytoplasmic" evidence="1">
    <location>
        <begin position="553"/>
        <end position="568"/>
    </location>
</feature>
<feature type="site" description="Cleavage; by host" evidence="1">
    <location>
        <begin position="346"/>
        <end position="347"/>
    </location>
</feature>
<feature type="lipid moiety-binding region" description="S-palmitoyl cysteine; by host" evidence="1">
    <location>
        <position position="557"/>
    </location>
</feature>
<feature type="lipid moiety-binding region" description="S-palmitoyl cysteine; by host" evidence="1">
    <location>
        <position position="564"/>
    </location>
</feature>
<feature type="lipid moiety-binding region" description="S-palmitoyl cysteine; by host" evidence="1">
    <location>
        <position position="567"/>
    </location>
</feature>
<feature type="glycosylation site" description="N-linked (GlcNAc...) asparagine; by host" evidence="1">
    <location>
        <position position="26"/>
    </location>
</feature>
<feature type="glycosylation site" description="N-linked (GlcNAc...) asparagine; by host" evidence="1">
    <location>
        <position position="27"/>
    </location>
</feature>
<feature type="glycosylation site" description="N-linked (GlcNAc...) asparagine; by host" evidence="1">
    <location>
        <position position="39"/>
    </location>
</feature>
<feature type="glycosylation site" description="N-linked (GlcNAc...) asparagine; by host" evidence="1">
    <location>
        <position position="181"/>
    </location>
</feature>
<feature type="glycosylation site" description="N-linked (GlcNAc...) asparagine; by host" evidence="1">
    <location>
        <position position="302"/>
    </location>
</feature>
<feature type="glycosylation site" description="N-linked (GlcNAc...) asparagine; by host" evidence="1">
    <location>
        <position position="500"/>
    </location>
</feature>
<feature type="disulfide bond" description="Interchain (between HA1 and HA2 chains)" evidence="1">
    <location>
        <begin position="20"/>
        <end position="483"/>
    </location>
</feature>
<feature type="disulfide bond" evidence="1">
    <location>
        <begin position="58"/>
        <end position="290"/>
    </location>
</feature>
<feature type="disulfide bond" evidence="1">
    <location>
        <begin position="71"/>
        <end position="83"/>
    </location>
</feature>
<feature type="disulfide bond" evidence="1">
    <location>
        <begin position="106"/>
        <end position="151"/>
    </location>
</feature>
<feature type="disulfide bond" evidence="1">
    <location>
        <begin position="294"/>
        <end position="318"/>
    </location>
</feature>
<feature type="disulfide bond" evidence="1">
    <location>
        <begin position="490"/>
        <end position="494"/>
    </location>
</feature>
<feature type="turn" evidence="3">
    <location>
        <begin position="353"/>
        <end position="355"/>
    </location>
</feature>
<feature type="strand" evidence="3">
    <location>
        <begin position="367"/>
        <end position="376"/>
    </location>
</feature>
<feature type="strand" evidence="3">
    <location>
        <begin position="378"/>
        <end position="382"/>
    </location>
</feature>
<feature type="helix" evidence="3">
    <location>
        <begin position="384"/>
        <end position="404"/>
    </location>
</feature>
<feature type="turn" evidence="3">
    <location>
        <begin position="405"/>
        <end position="407"/>
    </location>
</feature>
<feature type="helix" evidence="3">
    <location>
        <begin position="421"/>
        <end position="472"/>
    </location>
</feature>
<feature type="helix" evidence="3">
    <location>
        <begin position="473"/>
        <end position="475"/>
    </location>
</feature>
<feature type="strand" evidence="3">
    <location>
        <begin position="476"/>
        <end position="478"/>
    </location>
</feature>
<feature type="strand" evidence="3">
    <location>
        <begin position="480"/>
        <end position="488"/>
    </location>
</feature>
<feature type="helix" evidence="3">
    <location>
        <begin position="492"/>
        <end position="499"/>
    </location>
</feature>
<feature type="turn" evidence="3">
    <location>
        <begin position="505"/>
        <end position="507"/>
    </location>
</feature>
<feature type="helix" evidence="3">
    <location>
        <begin position="509"/>
        <end position="515"/>
    </location>
</feature>
<organism>
    <name type="scientific">Influenza A virus (strain A/Duck/Hong Kong/2986.1/2000 H5N1 genotype C)</name>
    <dbReference type="NCBI Taxonomy" id="176674"/>
    <lineage>
        <taxon>Viruses</taxon>
        <taxon>Riboviria</taxon>
        <taxon>Orthornavirae</taxon>
        <taxon>Negarnaviricota</taxon>
        <taxon>Polyploviricotina</taxon>
        <taxon>Insthoviricetes</taxon>
        <taxon>Articulavirales</taxon>
        <taxon>Orthomyxoviridae</taxon>
        <taxon>Alphainfluenzavirus</taxon>
        <taxon>Alphainfluenzavirus influenzae</taxon>
        <taxon>Influenza A virus</taxon>
    </lineage>
</organism>
<keyword id="KW-0002">3D-structure</keyword>
<keyword id="KW-1167">Clathrin- and caveolin-independent endocytosis of virus by host</keyword>
<keyword id="KW-1165">Clathrin-mediated endocytosis of virus by host</keyword>
<keyword id="KW-1015">Disulfide bond</keyword>
<keyword id="KW-1170">Fusion of virus membrane with host endosomal membrane</keyword>
<keyword id="KW-1168">Fusion of virus membrane with host membrane</keyword>
<keyword id="KW-0325">Glycoprotein</keyword>
<keyword id="KW-0348">Hemagglutinin</keyword>
<keyword id="KW-1032">Host cell membrane</keyword>
<keyword id="KW-1043">Host membrane</keyword>
<keyword id="KW-0945">Host-virus interaction</keyword>
<keyword id="KW-0449">Lipoprotein</keyword>
<keyword id="KW-0472">Membrane</keyword>
<keyword id="KW-0564">Palmitate</keyword>
<keyword id="KW-0732">Signal</keyword>
<keyword id="KW-0812">Transmembrane</keyword>
<keyword id="KW-1133">Transmembrane helix</keyword>
<keyword id="KW-1161">Viral attachment to host cell</keyword>
<keyword id="KW-0261">Viral envelope protein</keyword>
<keyword id="KW-1162">Viral penetration into host cytoplasm</keyword>
<keyword id="KW-0946">Virion</keyword>
<keyword id="KW-1164">Virus endocytosis by host</keyword>
<keyword id="KW-1160">Virus entry into host cell</keyword>
<name>HEMA_I00A0</name>
<organismHost>
    <name type="scientific">Aves</name>
    <dbReference type="NCBI Taxonomy" id="8782"/>
</organismHost>
<organismHost>
    <name type="scientific">Felis catus</name>
    <name type="common">Cat</name>
    <name type="synonym">Felis silvestris catus</name>
    <dbReference type="NCBI Taxonomy" id="9685"/>
</organismHost>
<organismHost>
    <name type="scientific">Homo sapiens</name>
    <name type="common">Human</name>
    <dbReference type="NCBI Taxonomy" id="9606"/>
</organismHost>
<organismHost>
    <name type="scientific">Panthera pardus</name>
    <name type="common">Leopard</name>
    <name type="synonym">Felis pardus</name>
    <dbReference type="NCBI Taxonomy" id="9691"/>
</organismHost>
<organismHost>
    <name type="scientific">Panthera tigris</name>
    <name type="common">Tiger</name>
    <dbReference type="NCBI Taxonomy" id="9694"/>
</organismHost>
<organismHost>
    <name type="scientific">Sus scrofa</name>
    <name type="common">Pig</name>
    <dbReference type="NCBI Taxonomy" id="9823"/>
</organismHost>
<protein>
    <recommendedName>
        <fullName evidence="1">Hemagglutinin</fullName>
    </recommendedName>
    <component>
        <recommendedName>
            <fullName evidence="1">Hemagglutinin HA1 chain</fullName>
        </recommendedName>
    </component>
    <component>
        <recommendedName>
            <fullName evidence="1">Hemagglutinin HA2 chain</fullName>
        </recommendedName>
    </component>
</protein>
<evidence type="ECO:0000255" key="1">
    <source>
        <dbReference type="HAMAP-Rule" id="MF_04072"/>
    </source>
</evidence>
<evidence type="ECO:0000305" key="2"/>
<evidence type="ECO:0007829" key="3">
    <source>
        <dbReference type="PDB" id="3S11"/>
    </source>
</evidence>
<reference key="1">
    <citation type="journal article" date="2002" name="Virology">
        <title>H5N1 influenza viruses isolated from geese in Southeastern China: evidence for genetic reassortment and interspecies transmission to ducks.</title>
        <authorList>
            <person name="Guan Y."/>
            <person name="Peiris M."/>
            <person name="Kong K.F."/>
            <person name="Dyrting K.C."/>
            <person name="Ellis T.M."/>
            <person name="Sit T."/>
            <person name="Zhang L.J."/>
            <person name="Shortridge K.F."/>
        </authorList>
    </citation>
    <scope>NUCLEOTIDE SEQUENCE [GENOMIC RNA]</scope>
</reference>
<proteinExistence type="evidence at protein level"/>
<sequence length="568" mass="64250">MEKIVLLLAIVSLVKSDQICIGYHANNSTEQVDTIMEKNVTVTHAQDILEKTHNGKLCDLDGVKPLILRDCSVAGWLLGNPMCDEFINVPEWSYIVEKASPANDLCYPGDFNDYEELKHLLSRINHFEKIQIIPKSSWSNHEASSGVSSACPYQGKSSFFRNVVWLIKKNSAYPTIKRSYNNTNQEDLLILWGIHHPNDAAEQTKLYQNPTTYISVGTSTLNQRLVPKIATRSKVNGQSGRMEFFWTILKPNDAINFESNGNFIAPEYAYKIVKKGDSAIMKSELEYGNCNTKCQTPMGAINSSMPFHNIHPLTIGECPKYVKSNRLVLATGLRNTPQRERRRKKRGLFGAIAGFIEGGWQGMVDGWYGYHHSNEQGSGYAADKESTQKAIDGVTNKVNSIIDKMNTQFEAVGREFNNLERRIENLNKKMEDGFLDVWTYNAELLVLMENERTLDFHDSNVKNLYDKVRLQLRDNAKELGNGCFEFYHKCDNECMESVKNGTYDYPQYSEEARLNREEISGVKLESMGTYQILSIYSTVASSLALAIMVAGLSLWMCSNGSLQCRICI</sequence>
<dbReference type="EMBL" id="AY059481">
    <property type="protein sequence ID" value="AAL31387.1"/>
    <property type="molecule type" value="Genomic_RNA"/>
</dbReference>
<dbReference type="PDB" id="3S11">
    <property type="method" value="X-ray"/>
    <property type="resolution" value="2.50 A"/>
    <property type="chains" value="B/D/F=347-522"/>
</dbReference>
<dbReference type="PDBsum" id="3S11"/>
<dbReference type="SMR" id="Q8QPL1"/>
<dbReference type="GlyCosmos" id="Q8QPL1">
    <property type="glycosylation" value="6 sites, No reported glycans"/>
</dbReference>
<dbReference type="EvolutionaryTrace" id="Q8QPL1"/>
<dbReference type="Proteomes" id="UP000008285">
    <property type="component" value="Genome"/>
</dbReference>
<dbReference type="GO" id="GO:0020002">
    <property type="term" value="C:host cell plasma membrane"/>
    <property type="evidence" value="ECO:0007669"/>
    <property type="project" value="UniProtKB-SubCell"/>
</dbReference>
<dbReference type="GO" id="GO:0016020">
    <property type="term" value="C:membrane"/>
    <property type="evidence" value="ECO:0007669"/>
    <property type="project" value="UniProtKB-UniRule"/>
</dbReference>
<dbReference type="GO" id="GO:0019031">
    <property type="term" value="C:viral envelope"/>
    <property type="evidence" value="ECO:0007669"/>
    <property type="project" value="UniProtKB-UniRule"/>
</dbReference>
<dbReference type="GO" id="GO:0055036">
    <property type="term" value="C:virion membrane"/>
    <property type="evidence" value="ECO:0007669"/>
    <property type="project" value="UniProtKB-SubCell"/>
</dbReference>
<dbReference type="GO" id="GO:0046789">
    <property type="term" value="F:host cell surface receptor binding"/>
    <property type="evidence" value="ECO:0007669"/>
    <property type="project" value="UniProtKB-UniRule"/>
</dbReference>
<dbReference type="GO" id="GO:0075512">
    <property type="term" value="P:clathrin-dependent endocytosis of virus by host cell"/>
    <property type="evidence" value="ECO:0007669"/>
    <property type="project" value="UniProtKB-UniRule"/>
</dbReference>
<dbReference type="GO" id="GO:0039654">
    <property type="term" value="P:fusion of virus membrane with host endosome membrane"/>
    <property type="evidence" value="ECO:0007669"/>
    <property type="project" value="UniProtKB-UniRule"/>
</dbReference>
<dbReference type="GO" id="GO:0019064">
    <property type="term" value="P:fusion of virus membrane with host plasma membrane"/>
    <property type="evidence" value="ECO:0007669"/>
    <property type="project" value="InterPro"/>
</dbReference>
<dbReference type="GO" id="GO:0046761">
    <property type="term" value="P:viral budding from plasma membrane"/>
    <property type="evidence" value="ECO:0007669"/>
    <property type="project" value="UniProtKB-UniRule"/>
</dbReference>
<dbReference type="GO" id="GO:0019062">
    <property type="term" value="P:virion attachment to host cell"/>
    <property type="evidence" value="ECO:0007669"/>
    <property type="project" value="UniProtKB-KW"/>
</dbReference>
<dbReference type="FunFam" id="3.90.209.20:FF:000001">
    <property type="entry name" value="Hemagglutinin"/>
    <property type="match status" value="1"/>
</dbReference>
<dbReference type="Gene3D" id="3.90.20.10">
    <property type="match status" value="1"/>
</dbReference>
<dbReference type="Gene3D" id="3.90.209.20">
    <property type="match status" value="1"/>
</dbReference>
<dbReference type="Gene3D" id="2.10.77.10">
    <property type="entry name" value="Hemagglutinin Chain A, Domain 2"/>
    <property type="match status" value="1"/>
</dbReference>
<dbReference type="HAMAP" id="MF_04072">
    <property type="entry name" value="INFV_HEMA"/>
    <property type="match status" value="1"/>
</dbReference>
<dbReference type="InterPro" id="IPR008980">
    <property type="entry name" value="Capsid_hemagglutn"/>
</dbReference>
<dbReference type="InterPro" id="IPR013828">
    <property type="entry name" value="Hemagglutn_HA1_a/b_dom_sf"/>
</dbReference>
<dbReference type="InterPro" id="IPR000149">
    <property type="entry name" value="Hemagglutn_influenz_A"/>
</dbReference>
<dbReference type="InterPro" id="IPR001364">
    <property type="entry name" value="Hemagglutn_influenz_A/B"/>
</dbReference>
<dbReference type="Pfam" id="PF00509">
    <property type="entry name" value="Hemagglutinin"/>
    <property type="match status" value="1"/>
</dbReference>
<dbReference type="PRINTS" id="PR00330">
    <property type="entry name" value="HEMAGGLUTN1"/>
</dbReference>
<dbReference type="PRINTS" id="PR00329">
    <property type="entry name" value="HEMAGGLUTN12"/>
</dbReference>
<dbReference type="SUPFAM" id="SSF58064">
    <property type="entry name" value="Influenza hemagglutinin (stalk)"/>
    <property type="match status" value="1"/>
</dbReference>
<dbReference type="SUPFAM" id="SSF49818">
    <property type="entry name" value="Viral protein domain"/>
    <property type="match status" value="1"/>
</dbReference>